<accession>P25552</accession>
<accession>Q2M887</accession>
<accession>Q6BF04</accession>
<dbReference type="EC" id="3.6.1.40" evidence="1 2 3"/>
<dbReference type="EMBL" id="M83316">
    <property type="protein sequence ID" value="AAB59049.1"/>
    <property type="molecule type" value="Genomic_DNA"/>
</dbReference>
<dbReference type="EMBL" id="M87049">
    <property type="protein sequence ID" value="AAA67580.1"/>
    <property type="molecule type" value="Genomic_DNA"/>
</dbReference>
<dbReference type="EMBL" id="U00096">
    <property type="protein sequence ID" value="AAT48210.1"/>
    <property type="molecule type" value="Genomic_DNA"/>
</dbReference>
<dbReference type="EMBL" id="AP009048">
    <property type="protein sequence ID" value="BAE77519.1"/>
    <property type="molecule type" value="Genomic_DNA"/>
</dbReference>
<dbReference type="PIR" id="A48285">
    <property type="entry name" value="A48285"/>
</dbReference>
<dbReference type="RefSeq" id="WP_001295254.1">
    <property type="nucleotide sequence ID" value="NZ_SSZK01000025.1"/>
</dbReference>
<dbReference type="RefSeq" id="YP_026252.1">
    <property type="nucleotide sequence ID" value="NC_000913.3"/>
</dbReference>
<dbReference type="PDB" id="6PBZ">
    <property type="method" value="X-ray"/>
    <property type="resolution" value="2.48 A"/>
    <property type="chains" value="A/B/C/D=1-494"/>
</dbReference>
<dbReference type="PDBsum" id="6PBZ"/>
<dbReference type="SMR" id="P25552"/>
<dbReference type="BioGRID" id="4263319">
    <property type="interactions" value="21"/>
</dbReference>
<dbReference type="FunCoup" id="P25552">
    <property type="interactions" value="239"/>
</dbReference>
<dbReference type="STRING" id="511145.b3779"/>
<dbReference type="jPOST" id="P25552"/>
<dbReference type="PaxDb" id="511145-b3779"/>
<dbReference type="EnsemblBacteria" id="AAT48210">
    <property type="protein sequence ID" value="AAT48210"/>
    <property type="gene ID" value="b3779"/>
</dbReference>
<dbReference type="GeneID" id="75174011"/>
<dbReference type="GeneID" id="948291"/>
<dbReference type="KEGG" id="ecj:JW5603"/>
<dbReference type="KEGG" id="eco:b3779"/>
<dbReference type="KEGG" id="ecoc:C3026_20460"/>
<dbReference type="PATRIC" id="fig|511145.12.peg.3894"/>
<dbReference type="EchoBASE" id="EB0408"/>
<dbReference type="eggNOG" id="COG0248">
    <property type="taxonomic scope" value="Bacteria"/>
</dbReference>
<dbReference type="HOGENOM" id="CLU_025908_4_0_6"/>
<dbReference type="InParanoid" id="P25552"/>
<dbReference type="OMA" id="WQICVGA"/>
<dbReference type="OrthoDB" id="9793035at2"/>
<dbReference type="PhylomeDB" id="P25552"/>
<dbReference type="BioCyc" id="EcoCyc:PPPGPPHYDRO-MONOMER"/>
<dbReference type="BioCyc" id="MetaCyc:PPPGPPHYDRO-MONOMER"/>
<dbReference type="BRENDA" id="3.6.1.40">
    <property type="organism ID" value="2026"/>
</dbReference>
<dbReference type="UniPathway" id="UPA00908">
    <property type="reaction ID" value="UER00885"/>
</dbReference>
<dbReference type="PRO" id="PR:P25552"/>
<dbReference type="Proteomes" id="UP000000625">
    <property type="component" value="Chromosome"/>
</dbReference>
<dbReference type="GO" id="GO:0008894">
    <property type="term" value="F:guanosine-5'-triphosphate,3'-diphosphate diphosphatase activity"/>
    <property type="evidence" value="ECO:0000314"/>
    <property type="project" value="EcoCyc"/>
</dbReference>
<dbReference type="GO" id="GO:0015974">
    <property type="term" value="P:guanosine pentaphosphate catabolic process"/>
    <property type="evidence" value="ECO:0007669"/>
    <property type="project" value="InterPro"/>
</dbReference>
<dbReference type="GO" id="GO:0015970">
    <property type="term" value="P:guanosine tetraphosphate biosynthetic process"/>
    <property type="evidence" value="ECO:0007669"/>
    <property type="project" value="UniProtKB-UniRule"/>
</dbReference>
<dbReference type="GO" id="GO:0015949">
    <property type="term" value="P:nucleobase-containing small molecule interconversion"/>
    <property type="evidence" value="ECO:0000315"/>
    <property type="project" value="EcoCyc"/>
</dbReference>
<dbReference type="GO" id="GO:0006793">
    <property type="term" value="P:phosphorus metabolic process"/>
    <property type="evidence" value="ECO:0000315"/>
    <property type="project" value="EcoCyc"/>
</dbReference>
<dbReference type="GO" id="GO:0042594">
    <property type="term" value="P:response to starvation"/>
    <property type="evidence" value="ECO:0000315"/>
    <property type="project" value="EcoCyc"/>
</dbReference>
<dbReference type="CDD" id="cd24117">
    <property type="entry name" value="ASKHA_NBD_EcGppA-like"/>
    <property type="match status" value="1"/>
</dbReference>
<dbReference type="FunFam" id="1.10.3210.10:FF:000004">
    <property type="entry name" value="Guanosine-5'-triphosphate,3'-diphosphate pyrophosphatase"/>
    <property type="match status" value="1"/>
</dbReference>
<dbReference type="FunFam" id="3.30.420.150:FF:000001">
    <property type="entry name" value="Guanosine-5'-triphosphate,3'-diphosphate pyrophosphatase"/>
    <property type="match status" value="1"/>
</dbReference>
<dbReference type="FunFam" id="3.30.420.40:FF:000023">
    <property type="entry name" value="Guanosine-5'-triphosphate,3'-diphosphate pyrophosphatase"/>
    <property type="match status" value="1"/>
</dbReference>
<dbReference type="Gene3D" id="3.30.420.40">
    <property type="match status" value="1"/>
</dbReference>
<dbReference type="Gene3D" id="3.30.420.150">
    <property type="entry name" value="Exopolyphosphatase. Domain 2"/>
    <property type="match status" value="1"/>
</dbReference>
<dbReference type="Gene3D" id="1.10.3210.10">
    <property type="entry name" value="Hypothetical protein af1432"/>
    <property type="match status" value="1"/>
</dbReference>
<dbReference type="HAMAP" id="MF_01550">
    <property type="entry name" value="GppA"/>
    <property type="match status" value="1"/>
</dbReference>
<dbReference type="InterPro" id="IPR043129">
    <property type="entry name" value="ATPase_NBD"/>
</dbReference>
<dbReference type="InterPro" id="IPR050273">
    <property type="entry name" value="GppA/Ppx_hydrolase"/>
</dbReference>
<dbReference type="InterPro" id="IPR023709">
    <property type="entry name" value="Guo-5TP_3DP_PyrP"/>
</dbReference>
<dbReference type="InterPro" id="IPR048950">
    <property type="entry name" value="Ppx_GppA_C"/>
</dbReference>
<dbReference type="InterPro" id="IPR003695">
    <property type="entry name" value="Ppx_GppA_N"/>
</dbReference>
<dbReference type="InterPro" id="IPR030673">
    <property type="entry name" value="PyroPPase_GppA_Ppx"/>
</dbReference>
<dbReference type="NCBIfam" id="NF008260">
    <property type="entry name" value="PRK11031.1"/>
    <property type="match status" value="1"/>
</dbReference>
<dbReference type="PANTHER" id="PTHR30005">
    <property type="entry name" value="EXOPOLYPHOSPHATASE"/>
    <property type="match status" value="1"/>
</dbReference>
<dbReference type="PANTHER" id="PTHR30005:SF0">
    <property type="entry name" value="RETROGRADE REGULATION PROTEIN 2"/>
    <property type="match status" value="1"/>
</dbReference>
<dbReference type="Pfam" id="PF02541">
    <property type="entry name" value="Ppx-GppA"/>
    <property type="match status" value="1"/>
</dbReference>
<dbReference type="Pfam" id="PF21447">
    <property type="entry name" value="Ppx-GppA_III"/>
    <property type="match status" value="1"/>
</dbReference>
<dbReference type="PIRSF" id="PIRSF001267">
    <property type="entry name" value="Pyrophosphatase_GppA_Ppx"/>
    <property type="match status" value="1"/>
</dbReference>
<dbReference type="SUPFAM" id="SSF53067">
    <property type="entry name" value="Actin-like ATPase domain"/>
    <property type="match status" value="2"/>
</dbReference>
<dbReference type="SUPFAM" id="SSF109604">
    <property type="entry name" value="HD-domain/PDEase-like"/>
    <property type="match status" value="1"/>
</dbReference>
<protein>
    <recommendedName>
        <fullName evidence="1 6">Guanosine-5'-triphosphate,3'-diphosphate pyrophosphatase</fullName>
        <ecNumber evidence="1 2 3">3.6.1.40</ecNumber>
    </recommendedName>
    <alternativeName>
        <fullName evidence="1 5">Guanosine pentaphosphate phosphohydrolase</fullName>
    </alternativeName>
    <alternativeName>
        <fullName evidence="1">pppGpp-5'-phosphohydrolase</fullName>
    </alternativeName>
</protein>
<comment type="function">
    <text evidence="2 3">Catalyzes the conversion of pppGpp to ppGpp. Guanosine pentaphosphate (pppGpp) is a cytoplasmic signaling molecule which together with ppGpp controls the 'stringent response', an adaptive process that allows bacteria to respond to amino acid starvation, resulting in the coordinated regulation of numerous cellular activities (PubMed:6130093, PubMed:8394006). In vitro, can hydrolyze pppGp (PubMed:6130093). Also has exopolyphosphatase activity, catalyzing the release of orthophosphate by processive hydrolysis of the phosphoanyhydride bonds of polyphosphate chains (1000 residues) (PubMed:8394006).</text>
</comment>
<comment type="catalytic activity">
    <reaction evidence="1 2 3">
        <text>guanosine 3'-diphosphate 5'-triphosphate + H2O = guanosine 3',5'-bis(diphosphate) + phosphate + H(+)</text>
        <dbReference type="Rhea" id="RHEA:13073"/>
        <dbReference type="ChEBI" id="CHEBI:15377"/>
        <dbReference type="ChEBI" id="CHEBI:15378"/>
        <dbReference type="ChEBI" id="CHEBI:43474"/>
        <dbReference type="ChEBI" id="CHEBI:77828"/>
        <dbReference type="ChEBI" id="CHEBI:142410"/>
        <dbReference type="EC" id="3.6.1.40"/>
    </reaction>
</comment>
<comment type="activity regulation">
    <text evidence="2 3">Requires Mg(2+) and a monovalent cation, with NH(4) preferred over K(+) (PubMed:6130093). KCl, NaCl and NaF salts inhibit the exopolyphosphatase activity (PubMed:8394006).</text>
</comment>
<comment type="biophysicochemical properties">
    <kinetics>
        <KM evidence="2">0.11 mM for pppGpp</KM>
        <KM evidence="3">0.13 mM for pppGpp</KM>
        <KM evidence="2">0.13 mM for pppGp</KM>
        <KM evidence="3">0.5 nM for long-chain poly(P)</KM>
        <text evidence="3">kcat is 0.023 sec(-1) for pppGpp hydrolase activity. kcat is 1.1 sec(-1) for the exopolyphosphatase activity.</text>
    </kinetics>
    <phDependence>
        <text evidence="2">Optimum pH is 9.</text>
    </phDependence>
</comment>
<comment type="pathway">
    <text evidence="1 7">Purine metabolism; ppGpp biosynthesis; ppGpp from GTP: step 2/2.</text>
</comment>
<comment type="similarity">
    <text evidence="1 6">Belongs to the GppA/Ppx family. GppA subfamily.</text>
</comment>
<sequence>MGSTSSLYAAIDLGSNSFHMLVVREVAGSIQTLTRIKRKVRLAAGLNSENALSNEAMERGWQCLRLFAERLQDIPPSQIRVVATATLRLAVNAGDFIAKAQEILGCPVQVISGEEEARLIYQGVAHTTGGADQRLVVDIGGASTELVTGTGAQTTSLFSLSMGCVTWLERYFADRNLGQENFDAAEKAAREVLRPVADELRYHGWKVCVGASGTVQALQEIMMAQGMDERITLEKLQQLKQRAIHCGRLEELEIDGLTLERALVFPSGLAILIAIFTELNIQCMTLAGGALREGLVYGMLHLAVEQDIRSRTLRNIQRRFMIDIDQAQRVAKVAANFFDQVENEWHLEAISRDLLISACQLHEIGLSVDFKQAPQHAAYLVRNLDLPGFTPAQKKLLATLLLNQTNPVDLSSLHQQNAVPPRVAEQLCRLLRLAIIFASRRRDDLVPEMTLQANHELLTLTLPQGWLTQHPLGKEIIAQESQWQSYVHWPLEVH</sequence>
<organism>
    <name type="scientific">Escherichia coli (strain K12)</name>
    <dbReference type="NCBI Taxonomy" id="83333"/>
    <lineage>
        <taxon>Bacteria</taxon>
        <taxon>Pseudomonadati</taxon>
        <taxon>Pseudomonadota</taxon>
        <taxon>Gammaproteobacteria</taxon>
        <taxon>Enterobacterales</taxon>
        <taxon>Enterobacteriaceae</taxon>
        <taxon>Escherichia</taxon>
    </lineage>
</organism>
<reference key="1">
    <citation type="journal article" date="1991" name="New Biol.">
        <title>rhlB, a new Escherichia coli K-12 gene with an RNA helicase-like protein sequence motif, one of at least five such possible genes in a prokaryote.</title>
        <authorList>
            <person name="Kalman M."/>
            <person name="Murphy H."/>
            <person name="Cashel M."/>
        </authorList>
    </citation>
    <scope>NUCLEOTIDE SEQUENCE [GENOMIC DNA]</scope>
    <source>
        <strain>K12</strain>
    </source>
</reference>
<reference key="2">
    <citation type="journal article" date="1992" name="Science">
        <title>Analysis of the Escherichia coli genome: DNA sequence of the region from 84.5 to 86.5 minutes.</title>
        <authorList>
            <person name="Daniels D.L."/>
            <person name="Plunkett G. III"/>
            <person name="Burland V.D."/>
            <person name="Blattner F.R."/>
        </authorList>
    </citation>
    <scope>NUCLEOTIDE SEQUENCE [LARGE SCALE GENOMIC DNA]</scope>
    <source>
        <strain>K12 / MG1655 / ATCC 47076</strain>
    </source>
</reference>
<reference key="3">
    <citation type="journal article" date="1997" name="Science">
        <title>The complete genome sequence of Escherichia coli K-12.</title>
        <authorList>
            <person name="Blattner F.R."/>
            <person name="Plunkett G. III"/>
            <person name="Bloch C.A."/>
            <person name="Perna N.T."/>
            <person name="Burland V."/>
            <person name="Riley M."/>
            <person name="Collado-Vides J."/>
            <person name="Glasner J.D."/>
            <person name="Rode C.K."/>
            <person name="Mayhew G.F."/>
            <person name="Gregor J."/>
            <person name="Davis N.W."/>
            <person name="Kirkpatrick H.A."/>
            <person name="Goeden M.A."/>
            <person name="Rose D.J."/>
            <person name="Mau B."/>
            <person name="Shao Y."/>
        </authorList>
    </citation>
    <scope>NUCLEOTIDE SEQUENCE [LARGE SCALE GENOMIC DNA]</scope>
    <source>
        <strain>K12 / MG1655 / ATCC 47076</strain>
    </source>
</reference>
<reference key="4">
    <citation type="journal article" date="2006" name="Nucleic Acids Res.">
        <title>Escherichia coli K-12: a cooperatively developed annotation snapshot -- 2005.</title>
        <authorList>
            <person name="Riley M."/>
            <person name="Abe T."/>
            <person name="Arnaud M.B."/>
            <person name="Berlyn M.K.B."/>
            <person name="Blattner F.R."/>
            <person name="Chaudhuri R.R."/>
            <person name="Glasner J.D."/>
            <person name="Horiuchi T."/>
            <person name="Keseler I.M."/>
            <person name="Kosuge T."/>
            <person name="Mori H."/>
            <person name="Perna N.T."/>
            <person name="Plunkett G. III"/>
            <person name="Rudd K.E."/>
            <person name="Serres M.H."/>
            <person name="Thomas G.H."/>
            <person name="Thomson N.R."/>
            <person name="Wishart D."/>
            <person name="Wanner B.L."/>
        </authorList>
    </citation>
    <scope>SEQUENCE REVISION TO 86 AND 423</scope>
</reference>
<reference key="5">
    <citation type="journal article" date="2006" name="Mol. Syst. Biol.">
        <title>Highly accurate genome sequences of Escherichia coli K-12 strains MG1655 and W3110.</title>
        <authorList>
            <person name="Hayashi K."/>
            <person name="Morooka N."/>
            <person name="Yamamoto Y."/>
            <person name="Fujita K."/>
            <person name="Isono K."/>
            <person name="Choi S."/>
            <person name="Ohtsubo E."/>
            <person name="Baba T."/>
            <person name="Wanner B.L."/>
            <person name="Mori H."/>
            <person name="Horiuchi T."/>
        </authorList>
    </citation>
    <scope>NUCLEOTIDE SEQUENCE [LARGE SCALE GENOMIC DNA]</scope>
    <source>
        <strain>K12 / W3110 / ATCC 27325 / DSM 5911</strain>
    </source>
</reference>
<reference key="6">
    <citation type="journal article" date="1983" name="J. Biol. Chem.">
        <title>Guanosine 5'-triphosphate, 3'-diphosphate 5'-phosphohydrolase. Purification and substrate specificity.</title>
        <authorList>
            <person name="Hara A."/>
            <person name="Sy J."/>
        </authorList>
    </citation>
    <scope>FUNCTION</scope>
    <scope>CATALYTIC ACTIVITY</scope>
    <scope>ACTIVITY REGULATION</scope>
    <scope>BIOPHYSICOCHEMICAL PROPERTIES</scope>
    <scope>PATHWAY</scope>
</reference>
<reference key="7">
    <citation type="journal article" date="1993" name="Trends Biochem. Sci.">
        <title>Exopolyphosphate phosphatase and guanosine pentaphosphate phosphatase belong to the sugar kinase/actin/hsp 70 superfamily.</title>
        <authorList>
            <person name="Reizer J."/>
            <person name="Reizer A."/>
            <person name="Saier M.H. Jr."/>
            <person name="Bork B."/>
            <person name="Sander C."/>
        </authorList>
    </citation>
    <scope>SIMILARITY TO PPX</scope>
</reference>
<reference key="8">
    <citation type="journal article" date="1993" name="Proc. Natl. Acad. Sci. U.S.A.">
        <title>Guanosine pentaphosphate phosphohydrolase of Escherichia coli is a long-chain exopolyphosphatase.</title>
        <authorList>
            <person name="Keasling J.D."/>
            <person name="Bertsch L."/>
            <person name="Kornberg A."/>
        </authorList>
    </citation>
    <scope>FUNCTION</scope>
    <scope>CATALYTIC ACTIVITY</scope>
    <scope>ACTIVITY REGULATION</scope>
    <scope>BIOPHYSICOCHEMICAL PROPERTIES</scope>
</reference>
<keyword id="KW-0002">3D-structure</keyword>
<keyword id="KW-0378">Hydrolase</keyword>
<keyword id="KW-1185">Reference proteome</keyword>
<feature type="chain" id="PRO_0000194280" description="Guanosine-5'-triphosphate,3'-diphosphate pyrophosphatase">
    <location>
        <begin position="1"/>
        <end position="494"/>
    </location>
</feature>
<feature type="sequence conflict" description="In Ref. 2; AAA67580." evidence="6" ref="2">
    <original>T</original>
    <variation>R</variation>
    <location>
        <position position="86"/>
    </location>
</feature>
<feature type="sequence conflict" description="In Ref. 2; AAA67580." evidence="6" ref="2">
    <original>V</original>
    <variation>L</variation>
    <location>
        <position position="423"/>
    </location>
</feature>
<feature type="sequence conflict" description="In Ref. 1; AAB59049." evidence="6" ref="1">
    <original>FASRRRDDLVPEMTLQANHELLTLTLPQGWLTQHPLGKEIIAQESQWQSYVHWPLEVH</original>
    <variation>VGQPSP</variation>
    <location>
        <begin position="437"/>
        <end position="494"/>
    </location>
</feature>
<feature type="strand" evidence="8">
    <location>
        <begin position="7"/>
        <end position="13"/>
    </location>
</feature>
<feature type="strand" evidence="8">
    <location>
        <begin position="15"/>
        <end position="26"/>
    </location>
</feature>
<feature type="strand" evidence="8">
    <location>
        <begin position="29"/>
        <end position="39"/>
    </location>
</feature>
<feature type="helix" evidence="8">
    <location>
        <begin position="43"/>
        <end position="45"/>
    </location>
</feature>
<feature type="helix" evidence="8">
    <location>
        <begin position="54"/>
        <end position="71"/>
    </location>
</feature>
<feature type="helix" evidence="8">
    <location>
        <begin position="76"/>
        <end position="78"/>
    </location>
</feature>
<feature type="strand" evidence="8">
    <location>
        <begin position="79"/>
        <end position="83"/>
    </location>
</feature>
<feature type="turn" evidence="8">
    <location>
        <begin position="85"/>
        <end position="89"/>
    </location>
</feature>
<feature type="helix" evidence="8">
    <location>
        <begin position="93"/>
        <end position="103"/>
    </location>
</feature>
<feature type="strand" evidence="8">
    <location>
        <begin position="104"/>
        <end position="106"/>
    </location>
</feature>
<feature type="strand" evidence="8">
    <location>
        <begin position="108"/>
        <end position="110"/>
    </location>
</feature>
<feature type="helix" evidence="8">
    <location>
        <begin position="113"/>
        <end position="127"/>
    </location>
</feature>
<feature type="strand" evidence="8">
    <location>
        <begin position="132"/>
        <end position="139"/>
    </location>
</feature>
<feature type="strand" evidence="8">
    <location>
        <begin position="144"/>
        <end position="150"/>
    </location>
</feature>
<feature type="strand" evidence="8">
    <location>
        <begin position="153"/>
        <end position="161"/>
    </location>
</feature>
<feature type="helix" evidence="8">
    <location>
        <begin position="164"/>
        <end position="171"/>
    </location>
</feature>
<feature type="turn" evidence="8">
    <location>
        <begin position="172"/>
        <end position="174"/>
    </location>
</feature>
<feature type="helix" evidence="8">
    <location>
        <begin position="179"/>
        <end position="203"/>
    </location>
</feature>
<feature type="strand" evidence="8">
    <location>
        <begin position="206"/>
        <end position="210"/>
    </location>
</feature>
<feature type="helix" evidence="8">
    <location>
        <begin position="213"/>
        <end position="225"/>
    </location>
</feature>
<feature type="helix" evidence="8">
    <location>
        <begin position="233"/>
        <end position="246"/>
    </location>
</feature>
<feature type="helix" evidence="8">
    <location>
        <begin position="249"/>
        <end position="251"/>
    </location>
</feature>
<feature type="helix" evidence="8">
    <location>
        <begin position="259"/>
        <end position="263"/>
    </location>
</feature>
<feature type="helix" evidence="8">
    <location>
        <begin position="265"/>
        <end position="278"/>
    </location>
</feature>
<feature type="strand" evidence="8">
    <location>
        <begin position="284"/>
        <end position="286"/>
    </location>
</feature>
<feature type="helix" evidence="8">
    <location>
        <begin position="291"/>
        <end position="300"/>
    </location>
</feature>
<feature type="helix" evidence="8">
    <location>
        <begin position="308"/>
        <end position="319"/>
    </location>
</feature>
<feature type="helix" evidence="8">
    <location>
        <begin position="324"/>
        <end position="345"/>
    </location>
</feature>
<feature type="helix" evidence="8">
    <location>
        <begin position="349"/>
        <end position="361"/>
    </location>
</feature>
<feature type="helix" evidence="8">
    <location>
        <begin position="362"/>
        <end position="367"/>
    </location>
</feature>
<feature type="helix" evidence="8">
    <location>
        <begin position="373"/>
        <end position="383"/>
    </location>
</feature>
<feature type="helix" evidence="8">
    <location>
        <begin position="391"/>
        <end position="402"/>
    </location>
</feature>
<feature type="strand" evidence="8">
    <location>
        <begin position="404"/>
        <end position="407"/>
    </location>
</feature>
<feature type="helix" evidence="8">
    <location>
        <begin position="410"/>
        <end position="413"/>
    </location>
</feature>
<feature type="helix" evidence="8">
    <location>
        <begin position="421"/>
        <end position="436"/>
    </location>
</feature>
<feature type="turn" evidence="8">
    <location>
        <begin position="437"/>
        <end position="440"/>
    </location>
</feature>
<feature type="helix" evidence="8">
    <location>
        <begin position="443"/>
        <end position="445"/>
    </location>
</feature>
<feature type="strand" evidence="8">
    <location>
        <begin position="450"/>
        <end position="454"/>
    </location>
</feature>
<feature type="strand" evidence="8">
    <location>
        <begin position="457"/>
        <end position="461"/>
    </location>
</feature>
<feature type="helix" evidence="8">
    <location>
        <begin position="466"/>
        <end position="469"/>
    </location>
</feature>
<feature type="helix" evidence="8">
    <location>
        <begin position="471"/>
        <end position="486"/>
    </location>
</feature>
<feature type="strand" evidence="8">
    <location>
        <begin position="491"/>
        <end position="494"/>
    </location>
</feature>
<evidence type="ECO:0000255" key="1">
    <source>
        <dbReference type="HAMAP-Rule" id="MF_01550"/>
    </source>
</evidence>
<evidence type="ECO:0000269" key="2">
    <source>
    </source>
</evidence>
<evidence type="ECO:0000269" key="3">
    <source>
    </source>
</evidence>
<evidence type="ECO:0000303" key="4">
    <source>
    </source>
</evidence>
<evidence type="ECO:0000303" key="5">
    <source>
    </source>
</evidence>
<evidence type="ECO:0000305" key="6"/>
<evidence type="ECO:0000305" key="7">
    <source>
    </source>
</evidence>
<evidence type="ECO:0007829" key="8">
    <source>
        <dbReference type="PDB" id="6PBZ"/>
    </source>
</evidence>
<proteinExistence type="evidence at protein level"/>
<gene>
    <name evidence="1" type="primary">gppA</name>
    <name evidence="4" type="synonym">gpp</name>
    <name type="ordered locus">b3779</name>
    <name type="ordered locus">JW5603</name>
</gene>
<name>GPPA_ECOLI</name>